<proteinExistence type="evidence at protein level"/>
<dbReference type="EMBL" id="AE016828">
    <property type="protein sequence ID" value="AAO91418.2"/>
    <property type="molecule type" value="Genomic_DNA"/>
</dbReference>
<dbReference type="EMBL" id="Y10436">
    <property type="protein sequence ID" value="CAA71461.1"/>
    <property type="molecule type" value="Genomic_DNA"/>
</dbReference>
<dbReference type="RefSeq" id="NP_820904.2">
    <property type="nucleotide sequence ID" value="NC_002971.4"/>
</dbReference>
<dbReference type="RefSeq" id="WP_010958544.1">
    <property type="nucleotide sequence ID" value="NC_002971.4"/>
</dbReference>
<dbReference type="SMR" id="Q83AH2"/>
<dbReference type="STRING" id="227377.CBU_1927"/>
<dbReference type="EnsemblBacteria" id="AAO91418">
    <property type="protein sequence ID" value="AAO91418"/>
    <property type="gene ID" value="CBU_1927"/>
</dbReference>
<dbReference type="GeneID" id="1209840"/>
<dbReference type="KEGG" id="cbu:CBU_1927"/>
<dbReference type="PATRIC" id="fig|227377.7.peg.1909"/>
<dbReference type="eggNOG" id="COG1475">
    <property type="taxonomic scope" value="Bacteria"/>
</dbReference>
<dbReference type="HOGENOM" id="CLU_023853_0_0_6"/>
<dbReference type="OrthoDB" id="9802051at2"/>
<dbReference type="Proteomes" id="UP000002671">
    <property type="component" value="Chromosome"/>
</dbReference>
<dbReference type="GO" id="GO:0005694">
    <property type="term" value="C:chromosome"/>
    <property type="evidence" value="ECO:0000318"/>
    <property type="project" value="GO_Central"/>
</dbReference>
<dbReference type="GO" id="GO:0003677">
    <property type="term" value="F:DNA binding"/>
    <property type="evidence" value="ECO:0007669"/>
    <property type="project" value="UniProtKB-KW"/>
</dbReference>
<dbReference type="GO" id="GO:0007059">
    <property type="term" value="P:chromosome segregation"/>
    <property type="evidence" value="ECO:0000318"/>
    <property type="project" value="GO_Central"/>
</dbReference>
<dbReference type="GO" id="GO:0045881">
    <property type="term" value="P:positive regulation of sporulation resulting in formation of a cellular spore"/>
    <property type="evidence" value="ECO:0000318"/>
    <property type="project" value="GO_Central"/>
</dbReference>
<dbReference type="CDD" id="cd16393">
    <property type="entry name" value="SPO0J_N"/>
    <property type="match status" value="1"/>
</dbReference>
<dbReference type="FunFam" id="1.10.10.2830:FF:000001">
    <property type="entry name" value="Chromosome partitioning protein ParB"/>
    <property type="match status" value="1"/>
</dbReference>
<dbReference type="FunFam" id="3.90.1530.30:FF:000001">
    <property type="entry name" value="Chromosome partitioning protein ParB"/>
    <property type="match status" value="1"/>
</dbReference>
<dbReference type="Gene3D" id="1.10.10.2830">
    <property type="match status" value="1"/>
</dbReference>
<dbReference type="Gene3D" id="3.90.1530.30">
    <property type="match status" value="1"/>
</dbReference>
<dbReference type="InterPro" id="IPR050336">
    <property type="entry name" value="Chromosome_partition/occlusion"/>
</dbReference>
<dbReference type="InterPro" id="IPR041468">
    <property type="entry name" value="HTH_ParB/Spo0J"/>
</dbReference>
<dbReference type="InterPro" id="IPR004437">
    <property type="entry name" value="ParB/RepB/Spo0J"/>
</dbReference>
<dbReference type="InterPro" id="IPR003115">
    <property type="entry name" value="ParB/Sulfiredoxin_dom"/>
</dbReference>
<dbReference type="InterPro" id="IPR036086">
    <property type="entry name" value="ParB/Sulfiredoxin_sf"/>
</dbReference>
<dbReference type="InterPro" id="IPR057240">
    <property type="entry name" value="ParB_dimer_C"/>
</dbReference>
<dbReference type="NCBIfam" id="TIGR00180">
    <property type="entry name" value="parB_part"/>
    <property type="match status" value="1"/>
</dbReference>
<dbReference type="PANTHER" id="PTHR33375">
    <property type="entry name" value="CHROMOSOME-PARTITIONING PROTEIN PARB-RELATED"/>
    <property type="match status" value="1"/>
</dbReference>
<dbReference type="PANTHER" id="PTHR33375:SF1">
    <property type="entry name" value="CHROMOSOME-PARTITIONING PROTEIN PARB-RELATED"/>
    <property type="match status" value="1"/>
</dbReference>
<dbReference type="Pfam" id="PF17762">
    <property type="entry name" value="HTH_ParB"/>
    <property type="match status" value="1"/>
</dbReference>
<dbReference type="Pfam" id="PF23552">
    <property type="entry name" value="ParB_dimer"/>
    <property type="match status" value="1"/>
</dbReference>
<dbReference type="Pfam" id="PF02195">
    <property type="entry name" value="ParBc"/>
    <property type="match status" value="1"/>
</dbReference>
<dbReference type="SMART" id="SM00470">
    <property type="entry name" value="ParB"/>
    <property type="match status" value="1"/>
</dbReference>
<dbReference type="SUPFAM" id="SSF110849">
    <property type="entry name" value="ParB/Sulfiredoxin"/>
    <property type="match status" value="1"/>
</dbReference>
<keyword id="KW-0159">Chromosome partition</keyword>
<keyword id="KW-0238">DNA-binding</keyword>
<keyword id="KW-1185">Reference proteome</keyword>
<name>PARB_COXBU</name>
<evidence type="ECO:0000250" key="1"/>
<evidence type="ECO:0000269" key="2">
    <source>
    </source>
</evidence>
<evidence type="ECO:0000305" key="3"/>
<organism>
    <name type="scientific">Coxiella burnetii (strain RSA 493 / Nine Mile phase I)</name>
    <dbReference type="NCBI Taxonomy" id="227377"/>
    <lineage>
        <taxon>Bacteria</taxon>
        <taxon>Pseudomonadati</taxon>
        <taxon>Pseudomonadota</taxon>
        <taxon>Gammaproteobacteria</taxon>
        <taxon>Legionellales</taxon>
        <taxon>Coxiellaceae</taxon>
        <taxon>Coxiella</taxon>
    </lineage>
</organism>
<feature type="chain" id="PRO_0000320580" description="Probable chromosome-partitioning protein ParB">
    <location>
        <begin position="1"/>
        <end position="290"/>
    </location>
</feature>
<protein>
    <recommendedName>
        <fullName>Probable chromosome-partitioning protein ParB</fullName>
    </recommendedName>
</protein>
<gene>
    <name type="primary">parB</name>
    <name type="ordered locus">CBU_1927</name>
</gene>
<accession>Q83AH2</accession>
<accession>P94615</accession>
<comment type="function">
    <text evidence="1">Involved in chromosome partition. Localize to both poles of the predivisional cell following completion of DNA replication. Binds to the DNA origin of replication (By similarity).</text>
</comment>
<comment type="developmental stage">
    <text evidence="2">More than twofold more abundant in the large cell variant (LCV) stage than in the small cell variant (SCV) stage (at protein level). LCVs are more metabolically active than SCVs.</text>
</comment>
<comment type="similarity">
    <text evidence="3">Belongs to the ParB family.</text>
</comment>
<sequence length="290" mass="32222">MSMTQKRGLGRGLSDLGLNELLTEINDASLADSKTELKKLTIDVIQPGRYQPRRQMDKDALEELANSIRAQGIIQPIVVRPVGQRYEIIAGERRWRAAQLAGLKEVPAVIRPITDEAAITMSLIENIQRQNLNAIEEAAALQRLLDEFKMTHEEIAEAVGKSRTSVTNSLRLLKLNPDVKALLEQGHLDMGHARALLALEGFQQSEAANIIIKRALSVRETEKLIQHWQSEGKSSANRPSMDPDVARLQHHLSDKLGAAVTIRHGAKGKGKLIIHYNSADELEGILDRIR</sequence>
<reference key="1">
    <citation type="journal article" date="2003" name="Proc. Natl. Acad. Sci. U.S.A.">
        <title>Complete genome sequence of the Q-fever pathogen, Coxiella burnetii.</title>
        <authorList>
            <person name="Seshadri R."/>
            <person name="Paulsen I.T."/>
            <person name="Eisen J.A."/>
            <person name="Read T.D."/>
            <person name="Nelson K.E."/>
            <person name="Nelson W.C."/>
            <person name="Ward N.L."/>
            <person name="Tettelin H."/>
            <person name="Davidsen T.M."/>
            <person name="Beanan M.J."/>
            <person name="DeBoy R.T."/>
            <person name="Daugherty S.C."/>
            <person name="Brinkac L.M."/>
            <person name="Madupu R."/>
            <person name="Dodson R.J."/>
            <person name="Khouri H.M."/>
            <person name="Lee K.H."/>
            <person name="Carty H.A."/>
            <person name="Scanlan D."/>
            <person name="Heinzen R.A."/>
            <person name="Thompson H.A."/>
            <person name="Samuel J.E."/>
            <person name="Fraser C.M."/>
            <person name="Heidelberg J.F."/>
        </authorList>
    </citation>
    <scope>NUCLEOTIDE SEQUENCE [LARGE SCALE GENOMIC DNA]</scope>
    <source>
        <strain>RSA 493 / Nine Mile phase I</strain>
    </source>
</reference>
<reference key="2">
    <citation type="journal article" date="1998" name="J. Bacteriol.">
        <title>Physical and genetic map of the obligate intracellular bacterium Coxiella burnetii.</title>
        <authorList>
            <person name="Willems H."/>
            <person name="Jaeger C."/>
            <person name="Baljer G."/>
        </authorList>
    </citation>
    <scope>NUCLEOTIDE SEQUENCE [GENOMIC DNA] OF 1-289</scope>
    <source>
        <strain>RSA 493 / Nine Mile phase I</strain>
    </source>
</reference>
<reference key="3">
    <citation type="journal article" date="2007" name="Infect. Immun.">
        <title>Proteome and antigen profiling of Coxiella burnetii developmental forms.</title>
        <authorList>
            <person name="Coleman S.A."/>
            <person name="Fischer E.R."/>
            <person name="Cockrell D.C."/>
            <person name="Voth D.E."/>
            <person name="Howe D."/>
            <person name="Mead D.J."/>
            <person name="Samuel J.E."/>
            <person name="Heinzen R.A."/>
        </authorList>
    </citation>
    <scope>IDENTIFICATION BY MASS SPECTROMETRY</scope>
    <scope>DEVELOPMENTAL STAGE</scope>
    <source>
        <strain>Nine Mile Crazy / RSA 514</strain>
    </source>
</reference>